<name>PGK_LIMF3</name>
<comment type="catalytic activity">
    <reaction evidence="1">
        <text>(2R)-3-phosphoglycerate + ATP = (2R)-3-phospho-glyceroyl phosphate + ADP</text>
        <dbReference type="Rhea" id="RHEA:14801"/>
        <dbReference type="ChEBI" id="CHEBI:30616"/>
        <dbReference type="ChEBI" id="CHEBI:57604"/>
        <dbReference type="ChEBI" id="CHEBI:58272"/>
        <dbReference type="ChEBI" id="CHEBI:456216"/>
        <dbReference type="EC" id="2.7.2.3"/>
    </reaction>
</comment>
<comment type="pathway">
    <text evidence="1">Carbohydrate degradation; glycolysis; pyruvate from D-glyceraldehyde 3-phosphate: step 2/5.</text>
</comment>
<comment type="subunit">
    <text evidence="1">Monomer.</text>
</comment>
<comment type="subcellular location">
    <subcellularLocation>
        <location evidence="1">Cytoplasm</location>
    </subcellularLocation>
</comment>
<comment type="similarity">
    <text evidence="1">Belongs to the phosphoglycerate kinase family.</text>
</comment>
<evidence type="ECO:0000255" key="1">
    <source>
        <dbReference type="HAMAP-Rule" id="MF_00145"/>
    </source>
</evidence>
<gene>
    <name evidence="1" type="primary">pgk</name>
    <name type="ordered locus">LAF_0364</name>
</gene>
<accession>B2GAL8</accession>
<sequence>MAKLTVEDLDLAGKKVLMRVDFNVPIKDGVVGDDNRIVAALPTIKYVLDHQGKAILFSHLGRIKKEDDKPGLSMRPVAERLSNLLNMPVTFVPVTEGPQLEDAIAKMEDGQVLVVQNTRYEDVKDGEYVKRESGNDPELGKYWASLGDLFINDAFGTAHRKHASNVGIASNMPGKAAAGFLMEKEIKFLGDAVTNPVRPFVAILGGAKVSDKIGVINNLLDKADKVIVGGGMTYTFYAAKGIKIGNSLVEEDKIDVAKEILEKAGDKLVLPVDNVVADKFANDANTKVVEGDIDDGWMALDIGPKSIEEFKKVLADAKTVVWNGPMGVFEMSNFAKGTLEVGQFLGTLEGATTIVGGGDSTAAAKQLGISDKLTHISTGGGASLAYLEGDVLPGIAAISDK</sequence>
<protein>
    <recommendedName>
        <fullName evidence="1">Phosphoglycerate kinase</fullName>
        <ecNumber evidence="1">2.7.2.3</ecNumber>
    </recommendedName>
</protein>
<proteinExistence type="inferred from homology"/>
<organism>
    <name type="scientific">Limosilactobacillus fermentum (strain NBRC 3956 / LMG 18251)</name>
    <name type="common">Lactobacillus fermentum</name>
    <dbReference type="NCBI Taxonomy" id="334390"/>
    <lineage>
        <taxon>Bacteria</taxon>
        <taxon>Bacillati</taxon>
        <taxon>Bacillota</taxon>
        <taxon>Bacilli</taxon>
        <taxon>Lactobacillales</taxon>
        <taxon>Lactobacillaceae</taxon>
        <taxon>Limosilactobacillus</taxon>
    </lineage>
</organism>
<reference key="1">
    <citation type="journal article" date="2008" name="DNA Res.">
        <title>Comparative genome analysis of Lactobacillus reuteri and Lactobacillus fermentum reveal a genomic island for reuterin and cobalamin production.</title>
        <authorList>
            <person name="Morita H."/>
            <person name="Toh H."/>
            <person name="Fukuda S."/>
            <person name="Horikawa H."/>
            <person name="Oshima K."/>
            <person name="Suzuki T."/>
            <person name="Murakami M."/>
            <person name="Hisamatsu S."/>
            <person name="Kato Y."/>
            <person name="Takizawa T."/>
            <person name="Fukuoka H."/>
            <person name="Yoshimura T."/>
            <person name="Itoh K."/>
            <person name="O'Sullivan D.J."/>
            <person name="McKay L.L."/>
            <person name="Ohno H."/>
            <person name="Kikuchi J."/>
            <person name="Masaoka T."/>
            <person name="Hattori M."/>
        </authorList>
    </citation>
    <scope>NUCLEOTIDE SEQUENCE [LARGE SCALE GENOMIC DNA]</scope>
    <source>
        <strain>NBRC 3956 / LMG 18251</strain>
    </source>
</reference>
<feature type="chain" id="PRO_1000096351" description="Phosphoglycerate kinase">
    <location>
        <begin position="1"/>
        <end position="401"/>
    </location>
</feature>
<feature type="binding site" evidence="1">
    <location>
        <begin position="21"/>
        <end position="23"/>
    </location>
    <ligand>
        <name>substrate</name>
    </ligand>
</feature>
<feature type="binding site" evidence="1">
    <location>
        <position position="36"/>
    </location>
    <ligand>
        <name>substrate</name>
    </ligand>
</feature>
<feature type="binding site" evidence="1">
    <location>
        <begin position="59"/>
        <end position="62"/>
    </location>
    <ligand>
        <name>substrate</name>
    </ligand>
</feature>
<feature type="binding site" evidence="1">
    <location>
        <position position="119"/>
    </location>
    <ligand>
        <name>substrate</name>
    </ligand>
</feature>
<feature type="binding site" evidence="1">
    <location>
        <position position="160"/>
    </location>
    <ligand>
        <name>substrate</name>
    </ligand>
</feature>
<feature type="binding site" evidence="1">
    <location>
        <position position="212"/>
    </location>
    <ligand>
        <name>ATP</name>
        <dbReference type="ChEBI" id="CHEBI:30616"/>
    </ligand>
</feature>
<feature type="binding site" evidence="1">
    <location>
        <position position="330"/>
    </location>
    <ligand>
        <name>ATP</name>
        <dbReference type="ChEBI" id="CHEBI:30616"/>
    </ligand>
</feature>
<feature type="binding site" evidence="1">
    <location>
        <begin position="357"/>
        <end position="360"/>
    </location>
    <ligand>
        <name>ATP</name>
        <dbReference type="ChEBI" id="CHEBI:30616"/>
    </ligand>
</feature>
<dbReference type="EC" id="2.7.2.3" evidence="1"/>
<dbReference type="EMBL" id="AP008937">
    <property type="protein sequence ID" value="BAG26700.1"/>
    <property type="molecule type" value="Genomic_DNA"/>
</dbReference>
<dbReference type="RefSeq" id="WP_003682636.1">
    <property type="nucleotide sequence ID" value="NC_010610.1"/>
</dbReference>
<dbReference type="SMR" id="B2GAL8"/>
<dbReference type="KEGG" id="lfe:LAF_0364"/>
<dbReference type="eggNOG" id="COG0126">
    <property type="taxonomic scope" value="Bacteria"/>
</dbReference>
<dbReference type="HOGENOM" id="CLU_025427_0_2_9"/>
<dbReference type="UniPathway" id="UPA00109">
    <property type="reaction ID" value="UER00185"/>
</dbReference>
<dbReference type="Proteomes" id="UP000001697">
    <property type="component" value="Chromosome"/>
</dbReference>
<dbReference type="GO" id="GO:0005829">
    <property type="term" value="C:cytosol"/>
    <property type="evidence" value="ECO:0007669"/>
    <property type="project" value="TreeGrafter"/>
</dbReference>
<dbReference type="GO" id="GO:0043531">
    <property type="term" value="F:ADP binding"/>
    <property type="evidence" value="ECO:0007669"/>
    <property type="project" value="TreeGrafter"/>
</dbReference>
<dbReference type="GO" id="GO:0005524">
    <property type="term" value="F:ATP binding"/>
    <property type="evidence" value="ECO:0007669"/>
    <property type="project" value="UniProtKB-KW"/>
</dbReference>
<dbReference type="GO" id="GO:0004618">
    <property type="term" value="F:phosphoglycerate kinase activity"/>
    <property type="evidence" value="ECO:0007669"/>
    <property type="project" value="UniProtKB-UniRule"/>
</dbReference>
<dbReference type="GO" id="GO:0006094">
    <property type="term" value="P:gluconeogenesis"/>
    <property type="evidence" value="ECO:0007669"/>
    <property type="project" value="TreeGrafter"/>
</dbReference>
<dbReference type="GO" id="GO:0006096">
    <property type="term" value="P:glycolytic process"/>
    <property type="evidence" value="ECO:0007669"/>
    <property type="project" value="UniProtKB-UniRule"/>
</dbReference>
<dbReference type="CDD" id="cd00318">
    <property type="entry name" value="Phosphoglycerate_kinase"/>
    <property type="match status" value="1"/>
</dbReference>
<dbReference type="FunFam" id="3.40.50.1260:FF:000001">
    <property type="entry name" value="Phosphoglycerate kinase"/>
    <property type="match status" value="1"/>
</dbReference>
<dbReference type="FunFam" id="3.40.50.1260:FF:000008">
    <property type="entry name" value="Phosphoglycerate kinase"/>
    <property type="match status" value="1"/>
</dbReference>
<dbReference type="Gene3D" id="3.40.50.1260">
    <property type="entry name" value="Phosphoglycerate kinase, N-terminal domain"/>
    <property type="match status" value="2"/>
</dbReference>
<dbReference type="HAMAP" id="MF_00145">
    <property type="entry name" value="Phosphoglyc_kinase"/>
    <property type="match status" value="1"/>
</dbReference>
<dbReference type="InterPro" id="IPR001576">
    <property type="entry name" value="Phosphoglycerate_kinase"/>
</dbReference>
<dbReference type="InterPro" id="IPR015911">
    <property type="entry name" value="Phosphoglycerate_kinase_CS"/>
</dbReference>
<dbReference type="InterPro" id="IPR015824">
    <property type="entry name" value="Phosphoglycerate_kinase_N"/>
</dbReference>
<dbReference type="InterPro" id="IPR036043">
    <property type="entry name" value="Phosphoglycerate_kinase_sf"/>
</dbReference>
<dbReference type="PANTHER" id="PTHR11406">
    <property type="entry name" value="PHOSPHOGLYCERATE KINASE"/>
    <property type="match status" value="1"/>
</dbReference>
<dbReference type="PANTHER" id="PTHR11406:SF23">
    <property type="entry name" value="PHOSPHOGLYCERATE KINASE 1, CHLOROPLASTIC-RELATED"/>
    <property type="match status" value="1"/>
</dbReference>
<dbReference type="Pfam" id="PF00162">
    <property type="entry name" value="PGK"/>
    <property type="match status" value="1"/>
</dbReference>
<dbReference type="PIRSF" id="PIRSF000724">
    <property type="entry name" value="Pgk"/>
    <property type="match status" value="1"/>
</dbReference>
<dbReference type="PRINTS" id="PR00477">
    <property type="entry name" value="PHGLYCKINASE"/>
</dbReference>
<dbReference type="SUPFAM" id="SSF53748">
    <property type="entry name" value="Phosphoglycerate kinase"/>
    <property type="match status" value="1"/>
</dbReference>
<dbReference type="PROSITE" id="PS00111">
    <property type="entry name" value="PGLYCERATE_KINASE"/>
    <property type="match status" value="1"/>
</dbReference>
<keyword id="KW-0067">ATP-binding</keyword>
<keyword id="KW-0963">Cytoplasm</keyword>
<keyword id="KW-0324">Glycolysis</keyword>
<keyword id="KW-0418">Kinase</keyword>
<keyword id="KW-0547">Nucleotide-binding</keyword>
<keyword id="KW-1185">Reference proteome</keyword>
<keyword id="KW-0808">Transferase</keyword>